<organism>
    <name type="scientific">Listeria monocytogenes serotype 4b (strain CLIP80459)</name>
    <dbReference type="NCBI Taxonomy" id="568819"/>
    <lineage>
        <taxon>Bacteria</taxon>
        <taxon>Bacillati</taxon>
        <taxon>Bacillota</taxon>
        <taxon>Bacilli</taxon>
        <taxon>Bacillales</taxon>
        <taxon>Listeriaceae</taxon>
        <taxon>Listeria</taxon>
    </lineage>
</organism>
<feature type="chain" id="PRO_1000203975" description="Protease HtpX homolog">
    <location>
        <begin position="1"/>
        <end position="304"/>
    </location>
</feature>
<feature type="transmembrane region" description="Helical" evidence="1">
    <location>
        <begin position="14"/>
        <end position="34"/>
    </location>
</feature>
<feature type="transmembrane region" description="Helical" evidence="1">
    <location>
        <begin position="39"/>
        <end position="59"/>
    </location>
</feature>
<feature type="transmembrane region" description="Helical" evidence="1">
    <location>
        <begin position="159"/>
        <end position="179"/>
    </location>
</feature>
<feature type="transmembrane region" description="Helical" evidence="1">
    <location>
        <begin position="202"/>
        <end position="222"/>
    </location>
</feature>
<feature type="active site" evidence="1">
    <location>
        <position position="145"/>
    </location>
</feature>
<feature type="binding site" evidence="1">
    <location>
        <position position="144"/>
    </location>
    <ligand>
        <name>Zn(2+)</name>
        <dbReference type="ChEBI" id="CHEBI:29105"/>
        <note>catalytic</note>
    </ligand>
</feature>
<feature type="binding site" evidence="1">
    <location>
        <position position="148"/>
    </location>
    <ligand>
        <name>Zn(2+)</name>
        <dbReference type="ChEBI" id="CHEBI:29105"/>
        <note>catalytic</note>
    </ligand>
</feature>
<feature type="binding site" evidence="1">
    <location>
        <position position="231"/>
    </location>
    <ligand>
        <name>Zn(2+)</name>
        <dbReference type="ChEBI" id="CHEBI:29105"/>
        <note>catalytic</note>
    </ligand>
</feature>
<protein>
    <recommendedName>
        <fullName evidence="1">Protease HtpX homolog</fullName>
        <ecNumber evidence="1">3.4.24.-</ecNumber>
    </recommendedName>
</protein>
<evidence type="ECO:0000255" key="1">
    <source>
        <dbReference type="HAMAP-Rule" id="MF_00188"/>
    </source>
</evidence>
<reference key="1">
    <citation type="journal article" date="2012" name="BMC Genomics">
        <title>Comparative genomics and transcriptomics of lineages I, II, and III strains of Listeria monocytogenes.</title>
        <authorList>
            <person name="Hain T."/>
            <person name="Ghai R."/>
            <person name="Billion A."/>
            <person name="Kuenne C.T."/>
            <person name="Steinweg C."/>
            <person name="Izar B."/>
            <person name="Mohamed W."/>
            <person name="Mraheil M."/>
            <person name="Domann E."/>
            <person name="Schaffrath S."/>
            <person name="Karst U."/>
            <person name="Goesmann A."/>
            <person name="Oehm S."/>
            <person name="Puhler A."/>
            <person name="Merkl R."/>
            <person name="Vorwerk S."/>
            <person name="Glaser P."/>
            <person name="Garrido P."/>
            <person name="Rusniok C."/>
            <person name="Buchrieser C."/>
            <person name="Goebel W."/>
            <person name="Chakraborty T."/>
        </authorList>
    </citation>
    <scope>NUCLEOTIDE SEQUENCE [LARGE SCALE GENOMIC DNA]</scope>
    <source>
        <strain>CLIP80459</strain>
    </source>
</reference>
<gene>
    <name evidence="1" type="primary">htpX</name>
    <name type="ordered locus">Lm4b_00983</name>
</gene>
<sequence>MLFEQIAANKRKTIFIILGFFIFVLMVGAAIGIIVWNNYLNGLILAAVIGAFYILIMVMSSSSVVMAMNHAKEVTSKDQAPVLWDTVESMAMVAGIPMPKVYIVEDASPNAFATGISPEKGAVAVTRGLLNKLERYELEGVIAHEISHIRNYDIRLSTIAIALVAVIAILSDLAMRMIFWGSLTGGRNNRKSDNNNSGGAQAIIYIVALIFVILAPIIATAIQFALSRNREYLADASAVELTRNPDGLIQALQKISGDSKKMEEVSASSESIYFASPLKSKKNKPGLFDSHPPISSRIERLENM</sequence>
<accession>C1L1N4</accession>
<dbReference type="EC" id="3.4.24.-" evidence="1"/>
<dbReference type="EMBL" id="FM242711">
    <property type="protein sequence ID" value="CAS04749.1"/>
    <property type="molecule type" value="Genomic_DNA"/>
</dbReference>
<dbReference type="RefSeq" id="WP_003726181.1">
    <property type="nucleotide sequence ID" value="NC_012488.1"/>
</dbReference>
<dbReference type="KEGG" id="lmc:Lm4b_00983"/>
<dbReference type="HOGENOM" id="CLU_042266_2_1_9"/>
<dbReference type="GO" id="GO:0005886">
    <property type="term" value="C:plasma membrane"/>
    <property type="evidence" value="ECO:0007669"/>
    <property type="project" value="UniProtKB-SubCell"/>
</dbReference>
<dbReference type="GO" id="GO:0004222">
    <property type="term" value="F:metalloendopeptidase activity"/>
    <property type="evidence" value="ECO:0007669"/>
    <property type="project" value="UniProtKB-UniRule"/>
</dbReference>
<dbReference type="GO" id="GO:0008270">
    <property type="term" value="F:zinc ion binding"/>
    <property type="evidence" value="ECO:0007669"/>
    <property type="project" value="UniProtKB-UniRule"/>
</dbReference>
<dbReference type="GO" id="GO:0006508">
    <property type="term" value="P:proteolysis"/>
    <property type="evidence" value="ECO:0007669"/>
    <property type="project" value="UniProtKB-KW"/>
</dbReference>
<dbReference type="CDD" id="cd07340">
    <property type="entry name" value="M48B_Htpx_like"/>
    <property type="match status" value="1"/>
</dbReference>
<dbReference type="Gene3D" id="3.30.2010.10">
    <property type="entry name" value="Metalloproteases ('zincins'), catalytic domain"/>
    <property type="match status" value="1"/>
</dbReference>
<dbReference type="HAMAP" id="MF_00188">
    <property type="entry name" value="Pept_M48_protease_HtpX"/>
    <property type="match status" value="1"/>
</dbReference>
<dbReference type="InterPro" id="IPR050083">
    <property type="entry name" value="HtpX_protease"/>
</dbReference>
<dbReference type="InterPro" id="IPR022919">
    <property type="entry name" value="Pept_M48_protease_HtpX"/>
</dbReference>
<dbReference type="InterPro" id="IPR001915">
    <property type="entry name" value="Peptidase_M48"/>
</dbReference>
<dbReference type="NCBIfam" id="NF003425">
    <property type="entry name" value="PRK04897.1"/>
    <property type="match status" value="1"/>
</dbReference>
<dbReference type="PANTHER" id="PTHR43221">
    <property type="entry name" value="PROTEASE HTPX"/>
    <property type="match status" value="1"/>
</dbReference>
<dbReference type="PANTHER" id="PTHR43221:SF1">
    <property type="entry name" value="PROTEASE HTPX"/>
    <property type="match status" value="1"/>
</dbReference>
<dbReference type="Pfam" id="PF01435">
    <property type="entry name" value="Peptidase_M48"/>
    <property type="match status" value="1"/>
</dbReference>
<comment type="cofactor">
    <cofactor evidence="1">
        <name>Zn(2+)</name>
        <dbReference type="ChEBI" id="CHEBI:29105"/>
    </cofactor>
    <text evidence="1">Binds 1 zinc ion per subunit.</text>
</comment>
<comment type="subcellular location">
    <subcellularLocation>
        <location evidence="1">Cell membrane</location>
        <topology evidence="1">Multi-pass membrane protein</topology>
    </subcellularLocation>
</comment>
<comment type="similarity">
    <text evidence="1">Belongs to the peptidase M48B family.</text>
</comment>
<keyword id="KW-1003">Cell membrane</keyword>
<keyword id="KW-0378">Hydrolase</keyword>
<keyword id="KW-0472">Membrane</keyword>
<keyword id="KW-0479">Metal-binding</keyword>
<keyword id="KW-0482">Metalloprotease</keyword>
<keyword id="KW-0645">Protease</keyword>
<keyword id="KW-0812">Transmembrane</keyword>
<keyword id="KW-1133">Transmembrane helix</keyword>
<keyword id="KW-0862">Zinc</keyword>
<name>HTPX_LISMC</name>
<proteinExistence type="inferred from homology"/>